<feature type="chain" id="PRO_0000175880" description="Probable transcriptional regulatory protein RT0442">
    <location>
        <begin position="1"/>
        <end position="252"/>
    </location>
</feature>
<feature type="region of interest" description="Disordered" evidence="2">
    <location>
        <begin position="1"/>
        <end position="22"/>
    </location>
</feature>
<sequence>MSGHSKFKNIQHRKGAQDKKKSKVFTKLIREIVTAVKTGASNVPENNPRLRKALNAARSQNLPKERIDKAINSANDASNTESYTEIRYEGYAPNGIAIIIEALTDNKNRTASEVRSSFTKYGGILGETGSVNYLFNHCGVIQYPINIASNEDIFEAAIEAGGNDIISNDFAHTIYTDIENFYKALGFLTDKYGIPEDSYIGWIPVNTIIIDDKEKAKKLLKLIEVLEENDDVQRVFGNYMLSEDVYEIIQEE</sequence>
<comment type="subcellular location">
    <subcellularLocation>
        <location evidence="1">Cytoplasm</location>
    </subcellularLocation>
</comment>
<comment type="similarity">
    <text evidence="1">Belongs to the TACO1 family.</text>
</comment>
<proteinExistence type="inferred from homology"/>
<protein>
    <recommendedName>
        <fullName evidence="1">Probable transcriptional regulatory protein RT0442</fullName>
    </recommendedName>
</protein>
<evidence type="ECO:0000255" key="1">
    <source>
        <dbReference type="HAMAP-Rule" id="MF_00693"/>
    </source>
</evidence>
<evidence type="ECO:0000256" key="2">
    <source>
        <dbReference type="SAM" id="MobiDB-lite"/>
    </source>
</evidence>
<keyword id="KW-0963">Cytoplasm</keyword>
<keyword id="KW-0238">DNA-binding</keyword>
<keyword id="KW-0804">Transcription</keyword>
<keyword id="KW-0805">Transcription regulation</keyword>
<dbReference type="EMBL" id="AE017197">
    <property type="protein sequence ID" value="AAU03918.1"/>
    <property type="molecule type" value="Genomic_DNA"/>
</dbReference>
<dbReference type="RefSeq" id="WP_011190902.1">
    <property type="nucleotide sequence ID" value="NC_006142.1"/>
</dbReference>
<dbReference type="SMR" id="Q68WS4"/>
<dbReference type="KEGG" id="rty:RT0442"/>
<dbReference type="eggNOG" id="COG0217">
    <property type="taxonomic scope" value="Bacteria"/>
</dbReference>
<dbReference type="HOGENOM" id="CLU_062974_2_2_5"/>
<dbReference type="OrthoDB" id="9781053at2"/>
<dbReference type="Proteomes" id="UP000000604">
    <property type="component" value="Chromosome"/>
</dbReference>
<dbReference type="GO" id="GO:0005737">
    <property type="term" value="C:cytoplasm"/>
    <property type="evidence" value="ECO:0007669"/>
    <property type="project" value="UniProtKB-SubCell"/>
</dbReference>
<dbReference type="GO" id="GO:0003677">
    <property type="term" value="F:DNA binding"/>
    <property type="evidence" value="ECO:0007669"/>
    <property type="project" value="UniProtKB-UniRule"/>
</dbReference>
<dbReference type="GO" id="GO:0006355">
    <property type="term" value="P:regulation of DNA-templated transcription"/>
    <property type="evidence" value="ECO:0007669"/>
    <property type="project" value="UniProtKB-UniRule"/>
</dbReference>
<dbReference type="FunFam" id="1.10.10.200:FF:000002">
    <property type="entry name" value="Probable transcriptional regulatory protein CLM62_37755"/>
    <property type="match status" value="1"/>
</dbReference>
<dbReference type="Gene3D" id="1.10.10.200">
    <property type="match status" value="1"/>
</dbReference>
<dbReference type="Gene3D" id="3.30.70.980">
    <property type="match status" value="2"/>
</dbReference>
<dbReference type="HAMAP" id="MF_00693">
    <property type="entry name" value="Transcrip_reg_TACO1"/>
    <property type="match status" value="1"/>
</dbReference>
<dbReference type="InterPro" id="IPR017856">
    <property type="entry name" value="Integrase-like_N"/>
</dbReference>
<dbReference type="InterPro" id="IPR048300">
    <property type="entry name" value="TACO1_YebC-like_2nd/3rd_dom"/>
</dbReference>
<dbReference type="InterPro" id="IPR049083">
    <property type="entry name" value="TACO1_YebC_N"/>
</dbReference>
<dbReference type="InterPro" id="IPR002876">
    <property type="entry name" value="Transcrip_reg_TACO1-like"/>
</dbReference>
<dbReference type="InterPro" id="IPR026564">
    <property type="entry name" value="Transcrip_reg_TACO1-like_dom3"/>
</dbReference>
<dbReference type="InterPro" id="IPR029072">
    <property type="entry name" value="YebC-like"/>
</dbReference>
<dbReference type="NCBIfam" id="NF001030">
    <property type="entry name" value="PRK00110.1"/>
    <property type="match status" value="1"/>
</dbReference>
<dbReference type="NCBIfam" id="NF009044">
    <property type="entry name" value="PRK12378.1"/>
    <property type="match status" value="1"/>
</dbReference>
<dbReference type="NCBIfam" id="TIGR01033">
    <property type="entry name" value="YebC/PmpR family DNA-binding transcriptional regulator"/>
    <property type="match status" value="1"/>
</dbReference>
<dbReference type="PANTHER" id="PTHR12532:SF11">
    <property type="match status" value="1"/>
</dbReference>
<dbReference type="PANTHER" id="PTHR12532">
    <property type="entry name" value="TRANSLATIONAL ACTIVATOR OF CYTOCHROME C OXIDASE 1"/>
    <property type="match status" value="1"/>
</dbReference>
<dbReference type="Pfam" id="PF20772">
    <property type="entry name" value="TACO1_YebC_N"/>
    <property type="match status" value="1"/>
</dbReference>
<dbReference type="Pfam" id="PF01709">
    <property type="entry name" value="Transcrip_reg"/>
    <property type="match status" value="1"/>
</dbReference>
<dbReference type="SUPFAM" id="SSF75625">
    <property type="entry name" value="YebC-like"/>
    <property type="match status" value="1"/>
</dbReference>
<name>Y442_RICTY</name>
<reference key="1">
    <citation type="journal article" date="2004" name="J. Bacteriol.">
        <title>Complete genome sequence of Rickettsia typhi and comparison with sequences of other Rickettsiae.</title>
        <authorList>
            <person name="McLeod M.P."/>
            <person name="Qin X."/>
            <person name="Karpathy S.E."/>
            <person name="Gioia J."/>
            <person name="Highlander S.K."/>
            <person name="Fox G.E."/>
            <person name="McNeill T.Z."/>
            <person name="Jiang H."/>
            <person name="Muzny D."/>
            <person name="Jacob L.S."/>
            <person name="Hawes A.C."/>
            <person name="Sodergren E."/>
            <person name="Gill R."/>
            <person name="Hume J."/>
            <person name="Morgan M."/>
            <person name="Fan G."/>
            <person name="Amin A.G."/>
            <person name="Gibbs R.A."/>
            <person name="Hong C."/>
            <person name="Yu X.-J."/>
            <person name="Walker D.H."/>
            <person name="Weinstock G.M."/>
        </authorList>
    </citation>
    <scope>NUCLEOTIDE SEQUENCE [LARGE SCALE GENOMIC DNA]</scope>
    <source>
        <strain>ATCC VR-144 / Wilmington</strain>
    </source>
</reference>
<accession>Q68WS4</accession>
<gene>
    <name type="ordered locus">RT0442</name>
</gene>
<organism>
    <name type="scientific">Rickettsia typhi (strain ATCC VR-144 / Wilmington)</name>
    <dbReference type="NCBI Taxonomy" id="257363"/>
    <lineage>
        <taxon>Bacteria</taxon>
        <taxon>Pseudomonadati</taxon>
        <taxon>Pseudomonadota</taxon>
        <taxon>Alphaproteobacteria</taxon>
        <taxon>Rickettsiales</taxon>
        <taxon>Rickettsiaceae</taxon>
        <taxon>Rickettsieae</taxon>
        <taxon>Rickettsia</taxon>
        <taxon>typhus group</taxon>
    </lineage>
</organism>